<protein>
    <recommendedName>
        <fullName>Transposon Tf2-8 polyprotein</fullName>
    </recommendedName>
    <alternativeName>
        <fullName>Retrotransposable element Tf2 155 kDa protein</fullName>
    </alternativeName>
</protein>
<feature type="chain" id="PRO_0000424431" description="Transposon Tf2-8 polyprotein">
    <location>
        <begin position="1"/>
        <end position="1333"/>
    </location>
</feature>
<feature type="domain" description="Peptidase A2">
    <location>
        <begin position="266"/>
        <end position="342"/>
    </location>
</feature>
<feature type="domain" description="Reverse transcriptase" evidence="2">
    <location>
        <begin position="436"/>
        <end position="615"/>
    </location>
</feature>
<feature type="domain" description="Integrase catalytic" evidence="3">
    <location>
        <begin position="979"/>
        <end position="1138"/>
    </location>
</feature>
<feature type="region of interest" description="Disordered" evidence="5">
    <location>
        <begin position="199"/>
        <end position="231"/>
    </location>
</feature>
<feature type="compositionally biased region" description="Polar residues" evidence="5">
    <location>
        <begin position="218"/>
        <end position="231"/>
    </location>
</feature>
<feature type="active site" description="For protease activity" evidence="4">
    <location>
        <position position="271"/>
    </location>
</feature>
<feature type="binding site" evidence="1">
    <location>
        <position position="502"/>
    </location>
    <ligand>
        <name>Mg(2+)</name>
        <dbReference type="ChEBI" id="CHEBI:18420"/>
        <label>1</label>
        <note>catalytic; for reverse transcriptase activity</note>
    </ligand>
</feature>
<feature type="binding site" evidence="1">
    <location>
        <position position="566"/>
    </location>
    <ligand>
        <name>Mg(2+)</name>
        <dbReference type="ChEBI" id="CHEBI:18420"/>
        <label>1</label>
        <note>catalytic; for reverse transcriptase activity</note>
    </ligand>
</feature>
<feature type="binding site" evidence="1">
    <location>
        <position position="567"/>
    </location>
    <ligand>
        <name>Mg(2+)</name>
        <dbReference type="ChEBI" id="CHEBI:18420"/>
        <label>1</label>
        <note>catalytic; for reverse transcriptase activity</note>
    </ligand>
</feature>
<feature type="binding site" evidence="1">
    <location>
        <position position="990"/>
    </location>
    <ligand>
        <name>Mg(2+)</name>
        <dbReference type="ChEBI" id="CHEBI:18420"/>
        <label>2</label>
        <note>catalytic; for integrase activity</note>
    </ligand>
</feature>
<feature type="binding site" evidence="1">
    <location>
        <position position="1050"/>
    </location>
    <ligand>
        <name>Mg(2+)</name>
        <dbReference type="ChEBI" id="CHEBI:18420"/>
        <label>2</label>
        <note>catalytic; for integrase activity</note>
    </ligand>
</feature>
<dbReference type="EMBL" id="CU329670">
    <property type="protein sequence ID" value="CAC37431.2"/>
    <property type="molecule type" value="Genomic_DNA"/>
</dbReference>
<dbReference type="RefSeq" id="NP_594898.2">
    <property type="nucleotide sequence ID" value="NM_001020327.1"/>
</dbReference>
<dbReference type="SMR" id="P0CT43"/>
<dbReference type="FunCoup" id="P0CT43">
    <property type="interactions" value="2"/>
</dbReference>
<dbReference type="STRING" id="284812.P0CT43"/>
<dbReference type="MEROPS" id="A02.051"/>
<dbReference type="EnsemblFungi" id="SPAC13D1.01c.1">
    <property type="protein sequence ID" value="SPAC13D1.01c.1:pep"/>
    <property type="gene ID" value="SPAC13D1.01c"/>
</dbReference>
<dbReference type="EnsemblFungi" id="SPAC19D5.09c.1">
    <property type="protein sequence ID" value="SPAC19D5.09c.1:pep"/>
    <property type="gene ID" value="SPAC19D5.09c"/>
</dbReference>
<dbReference type="GeneID" id="2542903"/>
<dbReference type="KEGG" id="spo:2542763"/>
<dbReference type="KEGG" id="spo:2542903"/>
<dbReference type="PomBase" id="SPAC19D5.09c">
    <property type="gene designation" value="Tf2-8"/>
</dbReference>
<dbReference type="VEuPathDB" id="FungiDB:SPAC13D1.01c"/>
<dbReference type="VEuPathDB" id="FungiDB:SPAC19D5.09c"/>
<dbReference type="HOGENOM" id="CLU_000384_4_0_1"/>
<dbReference type="InParanoid" id="P0CT43"/>
<dbReference type="PhylomeDB" id="P0CT43"/>
<dbReference type="PRO" id="PR:P0CT43"/>
<dbReference type="Proteomes" id="UP000002485">
    <property type="component" value="Chromosome I"/>
</dbReference>
<dbReference type="GO" id="GO:0005634">
    <property type="term" value="C:nucleus"/>
    <property type="evidence" value="ECO:0007669"/>
    <property type="project" value="UniProtKB-ARBA"/>
</dbReference>
<dbReference type="GO" id="GO:0004190">
    <property type="term" value="F:aspartic-type endopeptidase activity"/>
    <property type="evidence" value="ECO:0007669"/>
    <property type="project" value="UniProtKB-KW"/>
</dbReference>
<dbReference type="GO" id="GO:0003677">
    <property type="term" value="F:DNA binding"/>
    <property type="evidence" value="ECO:0007669"/>
    <property type="project" value="UniProtKB-KW"/>
</dbReference>
<dbReference type="GO" id="GO:0003887">
    <property type="term" value="F:DNA-directed DNA polymerase activity"/>
    <property type="evidence" value="ECO:0007669"/>
    <property type="project" value="UniProtKB-KW"/>
</dbReference>
<dbReference type="GO" id="GO:0004519">
    <property type="term" value="F:endonuclease activity"/>
    <property type="evidence" value="ECO:0007669"/>
    <property type="project" value="UniProtKB-KW"/>
</dbReference>
<dbReference type="GO" id="GO:0046872">
    <property type="term" value="F:metal ion binding"/>
    <property type="evidence" value="ECO:0007669"/>
    <property type="project" value="UniProtKB-KW"/>
</dbReference>
<dbReference type="GO" id="GO:0003723">
    <property type="term" value="F:RNA binding"/>
    <property type="evidence" value="ECO:0007669"/>
    <property type="project" value="UniProtKB-KW"/>
</dbReference>
<dbReference type="GO" id="GO:0003964">
    <property type="term" value="F:RNA-directed DNA polymerase activity"/>
    <property type="evidence" value="ECO:0007669"/>
    <property type="project" value="UniProtKB-KW"/>
</dbReference>
<dbReference type="GO" id="GO:0015074">
    <property type="term" value="P:DNA integration"/>
    <property type="evidence" value="ECO:0007669"/>
    <property type="project" value="UniProtKB-KW"/>
</dbReference>
<dbReference type="GO" id="GO:0006310">
    <property type="term" value="P:DNA recombination"/>
    <property type="evidence" value="ECO:0007669"/>
    <property type="project" value="UniProtKB-KW"/>
</dbReference>
<dbReference type="GO" id="GO:0006508">
    <property type="term" value="P:proteolysis"/>
    <property type="evidence" value="ECO:0007669"/>
    <property type="project" value="UniProtKB-KW"/>
</dbReference>
<dbReference type="CDD" id="cd00303">
    <property type="entry name" value="retropepsin_like"/>
    <property type="match status" value="1"/>
</dbReference>
<dbReference type="CDD" id="cd09274">
    <property type="entry name" value="RNase_HI_RT_Ty3"/>
    <property type="match status" value="1"/>
</dbReference>
<dbReference type="CDD" id="cd01647">
    <property type="entry name" value="RT_LTR"/>
    <property type="match status" value="1"/>
</dbReference>
<dbReference type="FunFam" id="3.10.20.370:FF:000003">
    <property type="entry name" value="Transposon Tf2-6 polyprotein"/>
    <property type="match status" value="1"/>
</dbReference>
<dbReference type="FunFam" id="3.30.70.270:FF:000045">
    <property type="entry name" value="Transposon Tf2-7 polyprotein"/>
    <property type="match status" value="1"/>
</dbReference>
<dbReference type="Gene3D" id="1.10.340.70">
    <property type="match status" value="1"/>
</dbReference>
<dbReference type="Gene3D" id="3.10.20.370">
    <property type="match status" value="1"/>
</dbReference>
<dbReference type="Gene3D" id="3.30.70.270">
    <property type="match status" value="2"/>
</dbReference>
<dbReference type="Gene3D" id="2.40.70.10">
    <property type="entry name" value="Acid Proteases"/>
    <property type="match status" value="1"/>
</dbReference>
<dbReference type="Gene3D" id="3.10.10.10">
    <property type="entry name" value="HIV Type 1 Reverse Transcriptase, subunit A, domain 1"/>
    <property type="match status" value="1"/>
</dbReference>
<dbReference type="Gene3D" id="3.30.420.10">
    <property type="entry name" value="Ribonuclease H-like superfamily/Ribonuclease H"/>
    <property type="match status" value="1"/>
</dbReference>
<dbReference type="InterPro" id="IPR001969">
    <property type="entry name" value="Aspartic_peptidase_AS"/>
</dbReference>
<dbReference type="InterPro" id="IPR043502">
    <property type="entry name" value="DNA/RNA_pol_sf"/>
</dbReference>
<dbReference type="InterPro" id="IPR001584">
    <property type="entry name" value="Integrase_cat-core"/>
</dbReference>
<dbReference type="InterPro" id="IPR041588">
    <property type="entry name" value="Integrase_H2C2"/>
</dbReference>
<dbReference type="InterPro" id="IPR021109">
    <property type="entry name" value="Peptidase_aspartic_dom_sf"/>
</dbReference>
<dbReference type="InterPro" id="IPR050951">
    <property type="entry name" value="Retrovirus_Pol_polyprotein"/>
</dbReference>
<dbReference type="InterPro" id="IPR043128">
    <property type="entry name" value="Rev_trsase/Diguanyl_cyclase"/>
</dbReference>
<dbReference type="InterPro" id="IPR012337">
    <property type="entry name" value="RNaseH-like_sf"/>
</dbReference>
<dbReference type="InterPro" id="IPR036397">
    <property type="entry name" value="RNaseH_sf"/>
</dbReference>
<dbReference type="InterPro" id="IPR000477">
    <property type="entry name" value="RT_dom"/>
</dbReference>
<dbReference type="InterPro" id="IPR041577">
    <property type="entry name" value="RT_RNaseH_2"/>
</dbReference>
<dbReference type="InterPro" id="IPR056924">
    <property type="entry name" value="SH3_Tf2-1"/>
</dbReference>
<dbReference type="InterPro" id="IPR056930">
    <property type="entry name" value="Tf2-1-like_C"/>
</dbReference>
<dbReference type="InterPro" id="IPR024648">
    <property type="entry name" value="Tf2-1-like_dom"/>
</dbReference>
<dbReference type="PANTHER" id="PTHR37984">
    <property type="entry name" value="PROTEIN CBG26694"/>
    <property type="match status" value="1"/>
</dbReference>
<dbReference type="PANTHER" id="PTHR37984:SF5">
    <property type="entry name" value="PROTEIN NYNRIN-LIKE"/>
    <property type="match status" value="1"/>
</dbReference>
<dbReference type="Pfam" id="PF17921">
    <property type="entry name" value="Integrase_H2C2"/>
    <property type="match status" value="1"/>
</dbReference>
<dbReference type="Pfam" id="PF12382">
    <property type="entry name" value="Peptidase_A2_2"/>
    <property type="match status" value="1"/>
</dbReference>
<dbReference type="Pfam" id="PF17919">
    <property type="entry name" value="RT_RNaseH_2"/>
    <property type="match status" value="1"/>
</dbReference>
<dbReference type="Pfam" id="PF00665">
    <property type="entry name" value="rve"/>
    <property type="match status" value="1"/>
</dbReference>
<dbReference type="Pfam" id="PF00078">
    <property type="entry name" value="RVT_1"/>
    <property type="match status" value="1"/>
</dbReference>
<dbReference type="Pfam" id="PF24626">
    <property type="entry name" value="SH3_Tf2-1"/>
    <property type="match status" value="1"/>
</dbReference>
<dbReference type="Pfam" id="PF24614">
    <property type="entry name" value="Tf2-1_C"/>
    <property type="match status" value="1"/>
</dbReference>
<dbReference type="SUPFAM" id="SSF50630">
    <property type="entry name" value="Acid proteases"/>
    <property type="match status" value="1"/>
</dbReference>
<dbReference type="SUPFAM" id="SSF56672">
    <property type="entry name" value="DNA/RNA polymerases"/>
    <property type="match status" value="1"/>
</dbReference>
<dbReference type="SUPFAM" id="SSF53098">
    <property type="entry name" value="Ribonuclease H-like"/>
    <property type="match status" value="1"/>
</dbReference>
<dbReference type="PROSITE" id="PS00141">
    <property type="entry name" value="ASP_PROTEASE"/>
    <property type="match status" value="1"/>
</dbReference>
<dbReference type="PROSITE" id="PS50994">
    <property type="entry name" value="INTEGRASE"/>
    <property type="match status" value="1"/>
</dbReference>
<dbReference type="PROSITE" id="PS50878">
    <property type="entry name" value="RT_POL"/>
    <property type="match status" value="1"/>
</dbReference>
<gene>
    <name type="primary">Tf2-8</name>
    <name type="synonym">Tf2-9</name>
    <name type="ORF">SPAC13D1.02c</name>
    <name type="ORF">SPAC19D5.09c</name>
</gene>
<accession>P0CT43</accession>
<accession>Q9C0R2</accession>
<accession>Q9C119</accession>
<name>TF28_SCHPO</name>
<reference key="1">
    <citation type="journal article" date="2002" name="Nature">
        <title>The genome sequence of Schizosaccharomyces pombe.</title>
        <authorList>
            <person name="Wood V."/>
            <person name="Gwilliam R."/>
            <person name="Rajandream M.A."/>
            <person name="Lyne M.H."/>
            <person name="Lyne R."/>
            <person name="Stewart A."/>
            <person name="Sgouros J.G."/>
            <person name="Peat N."/>
            <person name="Hayles J."/>
            <person name="Baker S.G."/>
            <person name="Basham D."/>
            <person name="Bowman S."/>
            <person name="Brooks K."/>
            <person name="Brown D."/>
            <person name="Brown S."/>
            <person name="Chillingworth T."/>
            <person name="Churcher C.M."/>
            <person name="Collins M."/>
            <person name="Connor R."/>
            <person name="Cronin A."/>
            <person name="Davis P."/>
            <person name="Feltwell T."/>
            <person name="Fraser A."/>
            <person name="Gentles S."/>
            <person name="Goble A."/>
            <person name="Hamlin N."/>
            <person name="Harris D.E."/>
            <person name="Hidalgo J."/>
            <person name="Hodgson G."/>
            <person name="Holroyd S."/>
            <person name="Hornsby T."/>
            <person name="Howarth S."/>
            <person name="Huckle E.J."/>
            <person name="Hunt S."/>
            <person name="Jagels K."/>
            <person name="James K.D."/>
            <person name="Jones L."/>
            <person name="Jones M."/>
            <person name="Leather S."/>
            <person name="McDonald S."/>
            <person name="McLean J."/>
            <person name="Mooney P."/>
            <person name="Moule S."/>
            <person name="Mungall K.L."/>
            <person name="Murphy L.D."/>
            <person name="Niblett D."/>
            <person name="Odell C."/>
            <person name="Oliver K."/>
            <person name="O'Neil S."/>
            <person name="Pearson D."/>
            <person name="Quail M.A."/>
            <person name="Rabbinowitsch E."/>
            <person name="Rutherford K.M."/>
            <person name="Rutter S."/>
            <person name="Saunders D."/>
            <person name="Seeger K."/>
            <person name="Sharp S."/>
            <person name="Skelton J."/>
            <person name="Simmonds M.N."/>
            <person name="Squares R."/>
            <person name="Squares S."/>
            <person name="Stevens K."/>
            <person name="Taylor K."/>
            <person name="Taylor R.G."/>
            <person name="Tivey A."/>
            <person name="Walsh S.V."/>
            <person name="Warren T."/>
            <person name="Whitehead S."/>
            <person name="Woodward J.R."/>
            <person name="Volckaert G."/>
            <person name="Aert R."/>
            <person name="Robben J."/>
            <person name="Grymonprez B."/>
            <person name="Weltjens I."/>
            <person name="Vanstreels E."/>
            <person name="Rieger M."/>
            <person name="Schaefer M."/>
            <person name="Mueller-Auer S."/>
            <person name="Gabel C."/>
            <person name="Fuchs M."/>
            <person name="Duesterhoeft A."/>
            <person name="Fritzc C."/>
            <person name="Holzer E."/>
            <person name="Moestl D."/>
            <person name="Hilbert H."/>
            <person name="Borzym K."/>
            <person name="Langer I."/>
            <person name="Beck A."/>
            <person name="Lehrach H."/>
            <person name="Reinhardt R."/>
            <person name="Pohl T.M."/>
            <person name="Eger P."/>
            <person name="Zimmermann W."/>
            <person name="Wedler H."/>
            <person name="Wambutt R."/>
            <person name="Purnelle B."/>
            <person name="Goffeau A."/>
            <person name="Cadieu E."/>
            <person name="Dreano S."/>
            <person name="Gloux S."/>
            <person name="Lelaure V."/>
            <person name="Mottier S."/>
            <person name="Galibert F."/>
            <person name="Aves S.J."/>
            <person name="Xiang Z."/>
            <person name="Hunt C."/>
            <person name="Moore K."/>
            <person name="Hurst S.M."/>
            <person name="Lucas M."/>
            <person name="Rochet M."/>
            <person name="Gaillardin C."/>
            <person name="Tallada V.A."/>
            <person name="Garzon A."/>
            <person name="Thode G."/>
            <person name="Daga R.R."/>
            <person name="Cruzado L."/>
            <person name="Jimenez J."/>
            <person name="Sanchez M."/>
            <person name="del Rey F."/>
            <person name="Benito J."/>
            <person name="Dominguez A."/>
            <person name="Revuelta J.L."/>
            <person name="Moreno S."/>
            <person name="Armstrong J."/>
            <person name="Forsburg S.L."/>
            <person name="Cerutti L."/>
            <person name="Lowe T."/>
            <person name="McCombie W.R."/>
            <person name="Paulsen I."/>
            <person name="Potashkin J."/>
            <person name="Shpakovski G.V."/>
            <person name="Ussery D."/>
            <person name="Barrell B.G."/>
            <person name="Nurse P."/>
        </authorList>
    </citation>
    <scope>NUCLEOTIDE SEQUENCE [LARGE SCALE GENOMIC DNA]</scope>
    <source>
        <strain>972 / ATCC 24843</strain>
    </source>
</reference>
<reference key="2">
    <citation type="journal article" date="2003" name="Genome Res.">
        <title>Retrotransposons and their recognition of pol II promoters: a comprehensive survey of the transposable elements from the complete genome sequence of Schizosaccharomyces pombe.</title>
        <authorList>
            <person name="Bowen N.J."/>
            <person name="Jordan I.K."/>
            <person name="Epstein J.A."/>
            <person name="Wood V."/>
            <person name="Levin H.L."/>
        </authorList>
    </citation>
    <scope>NOMENCLATURE</scope>
</reference>
<sequence length="1333" mass="154955">MSYANYRYMKARAKRWRPENLDGIQTSDEHLINLFAKILSKHVPEIGKFDPNKDVESYISKLDQHFTEYPSLFPNEHTKRQYTLNHLEELEQQFAERMFSENGSLTWQELLRQTGKVQGSNKGDRLTKTFEGFRNQLDKVQFIRKLMSKANVDDFHTRLFILWMLPYSLRKLKERNYWKSEISEIYDFLEDKRTASYGKTHKRFQPQNKNLGKESLSKKNNTTNSRNLRKTNVSRIEYSSNKFLNHTRKRYEMVLQAELPDFKCSIPCLIDTGAQANIITEETVRAHKLPTRPWSKSVIYGGVYPNKINRKTIKLNISLNGISIKTEFLVVKKFSHPAAISFTTLYDNNIEISSSKHTLSQMNKVSNIVKEPELPDIYKEFKDITAETNTEKLPKPIKGLEFEVELTQENYRLPIRNYPLPPGKMQAMNDEINQGLKSGIIRESKAINACPVMFVPKKEGTLRMVVDYKPLNKYVKPNIYPLPLIEQLLAKIQGSTIFTKLDLKSAYHLIRVRKGDEHKLAFRCPRGVFEYLVMPYGISIAPAHFQYFINTILGEVKESHVVCYMDNILIHSKSESEHVKHVKDVLQKLKNANLIINQAKCEFHQSQVKFIGYHISEKGFTPCQENIDKVLQWKQPKNRKELRQFLGSVNYLRKFIPKTSQLTHPLNNLLKKDVRWKWTPTQTQAIENIKQCLVSPPVLRHFDFSKKILLETDASDVAVGAVLSQKHDDDKYYPVGYYSAKMSKAQLNYSVSDKEMLAIIKSLKHWRHYLESTIEPFKILTDHRNLIGRITNESEPENKRLARWQLFLQDFNFEINYRPGSANHIADALSRIVDETEPIPKDSEDNSINFVNQISITDDFKNQVVTEYTNDTKLLNLLNNEDKRVEENIQLKDGLLINSKDQILLPNDTQLTRTIIKKYHEEGKLIHPGIELLTNIILRRFTWKGIRKQIQEYVQNCHTCQINKSRNHKPYGPLQPIPPSERPWESLSMDFITALPESSGYNALFVVVDRFSKMAILVPCTKSITAEQTARMFDQRVIAYFGNPKEIIADNDHIFTSQTWKDFAHKYNFVMKFSLPYRPQTDGQTERTNQTVEKLLRCVCSTHPNTWVDHISLVQQSYNNAIHSATQMTPFEIVHRYSPALSPLELPSFSDKTDENSQETIQVFQTVKEHLNTNNIKMKKYFDMKIQEIEEFQPGDLVMVKRTKTGFLHKSNKLAPSFAGPFYVLQKSGPNNYELDLPDSIKHMFSSTFHVSHLEKYRHNSELNYATIDESDIGTILHILEHKNREQVLYLNVKYISNLNPSTIMSGWTTLATALQADKAIVNDYIKNNNLNI</sequence>
<keyword id="KW-0064">Aspartyl protease</keyword>
<keyword id="KW-0229">DNA integration</keyword>
<keyword id="KW-0233">DNA recombination</keyword>
<keyword id="KW-0238">DNA-binding</keyword>
<keyword id="KW-0239">DNA-directed DNA polymerase</keyword>
<keyword id="KW-0255">Endonuclease</keyword>
<keyword id="KW-0378">Hydrolase</keyword>
<keyword id="KW-0460">Magnesium</keyword>
<keyword id="KW-0479">Metal-binding</keyword>
<keyword id="KW-0511">Multifunctional enzyme</keyword>
<keyword id="KW-0540">Nuclease</keyword>
<keyword id="KW-0548">Nucleotidyltransferase</keyword>
<keyword id="KW-0645">Protease</keyword>
<keyword id="KW-1185">Reference proteome</keyword>
<keyword id="KW-0694">RNA-binding</keyword>
<keyword id="KW-0695">RNA-directed DNA polymerase</keyword>
<keyword id="KW-0808">Transferase</keyword>
<keyword id="KW-0814">Transposable element</keyword>
<organism>
    <name type="scientific">Schizosaccharomyces pombe (strain 972 / ATCC 24843)</name>
    <name type="common">Fission yeast</name>
    <dbReference type="NCBI Taxonomy" id="284812"/>
    <lineage>
        <taxon>Eukaryota</taxon>
        <taxon>Fungi</taxon>
        <taxon>Dikarya</taxon>
        <taxon>Ascomycota</taxon>
        <taxon>Taphrinomycotina</taxon>
        <taxon>Schizosaccharomycetes</taxon>
        <taxon>Schizosaccharomycetales</taxon>
        <taxon>Schizosaccharomycetaceae</taxon>
        <taxon>Schizosaccharomyces</taxon>
    </lineage>
</organism>
<evidence type="ECO:0000250" key="1"/>
<evidence type="ECO:0000255" key="2">
    <source>
        <dbReference type="PROSITE-ProRule" id="PRU00405"/>
    </source>
</evidence>
<evidence type="ECO:0000255" key="3">
    <source>
        <dbReference type="PROSITE-ProRule" id="PRU00457"/>
    </source>
</evidence>
<evidence type="ECO:0000255" key="4">
    <source>
        <dbReference type="PROSITE-ProRule" id="PRU10094"/>
    </source>
</evidence>
<evidence type="ECO:0000256" key="5">
    <source>
        <dbReference type="SAM" id="MobiDB-lite"/>
    </source>
</evidence>
<comment type="PTM">
    <text evidence="1">Processing of the polyproteins proceeds by an ordered pathway, called maturation. It involves the initial cleavage of a 27 kDa capsid protein (CA) from the N-terminus of the polyprotein, followed by the cleavage of a 56 kDa integrase (IN) from the C-terminus. This leaves a 72 kDa protease-reverse transcriptase fusion protein (PR-RT), which does not seem to be processed further (By similarity).</text>
</comment>
<comment type="miscellaneous">
    <text>Retrotransposons are mobile genetic entities that are able to replicate via an RNA intermediate and a reverse transcription step. In contrast to retroviruses, retrotransposons are non-infectious, lack an envelope and remain intracellular. Tf2 retrotransposons belong to the gypsy-like elements (metaviridae).</text>
</comment>
<proteinExistence type="inferred from homology"/>